<feature type="chain" id="PRO_0000176946" description="Transcription elongation factor GreB">
    <location>
        <begin position="1"/>
        <end position="163"/>
    </location>
</feature>
<feature type="coiled-coil region" evidence="1">
    <location>
        <begin position="54"/>
        <end position="76"/>
    </location>
</feature>
<gene>
    <name evidence="1" type="primary">greB</name>
    <name type="ordered locus">NMA0891</name>
</gene>
<protein>
    <recommendedName>
        <fullName evidence="1">Transcription elongation factor GreB</fullName>
    </recommendedName>
    <alternativeName>
        <fullName evidence="1">Transcript cleavage factor GreB</fullName>
    </alternativeName>
</protein>
<proteinExistence type="inferred from homology"/>
<sequence>MSTETKNYITPAGWQALKDELYQLVNKERPEIVQIVNWAAGNGDRSENGDYLYGKRRMREIDRRIRFLTKRLEAAVVVDPELREATDQVFFGATVGLLRGDGREQTVKIVGIDEIDTAQNKISWISPLARCLIKAREGDEVVLNTPEGREEIEILSVEYIKID</sequence>
<comment type="function">
    <text evidence="1">Necessary for efficient RNA polymerase transcription elongation past template-encoded arresting sites. The arresting sites in DNA have the property of trapping a certain fraction of elongating RNA polymerases that pass through, resulting in locked ternary complexes. Cleavage of the nascent transcript by cleavage factors such as GreA or GreB allows the resumption of elongation from the new 3'terminus. GreB releases sequences of up to 9 nucleotides in length.</text>
</comment>
<comment type="similarity">
    <text evidence="1">Belongs to the GreA/GreB family. GreB subfamily.</text>
</comment>
<keyword id="KW-0175">Coiled coil</keyword>
<keyword id="KW-0238">DNA-binding</keyword>
<keyword id="KW-0804">Transcription</keyword>
<keyword id="KW-0805">Transcription regulation</keyword>
<dbReference type="EMBL" id="AL157959">
    <property type="protein sequence ID" value="CAM08126.1"/>
    <property type="molecule type" value="Genomic_DNA"/>
</dbReference>
<dbReference type="PIR" id="F81935">
    <property type="entry name" value="F81935"/>
</dbReference>
<dbReference type="RefSeq" id="WP_002236813.1">
    <property type="nucleotide sequence ID" value="NC_003116.1"/>
</dbReference>
<dbReference type="SMR" id="Q9JVD0"/>
<dbReference type="EnsemblBacteria" id="CAM08126">
    <property type="protein sequence ID" value="CAM08126"/>
    <property type="gene ID" value="NMA0891"/>
</dbReference>
<dbReference type="GeneID" id="93386485"/>
<dbReference type="KEGG" id="nma:NMA0891"/>
<dbReference type="HOGENOM" id="CLU_101379_3_0_4"/>
<dbReference type="Proteomes" id="UP000000626">
    <property type="component" value="Chromosome"/>
</dbReference>
<dbReference type="GO" id="GO:0003677">
    <property type="term" value="F:DNA binding"/>
    <property type="evidence" value="ECO:0007669"/>
    <property type="project" value="UniProtKB-UniRule"/>
</dbReference>
<dbReference type="GO" id="GO:0070063">
    <property type="term" value="F:RNA polymerase binding"/>
    <property type="evidence" value="ECO:0007669"/>
    <property type="project" value="InterPro"/>
</dbReference>
<dbReference type="GO" id="GO:0006354">
    <property type="term" value="P:DNA-templated transcription elongation"/>
    <property type="evidence" value="ECO:0007669"/>
    <property type="project" value="TreeGrafter"/>
</dbReference>
<dbReference type="GO" id="GO:0032784">
    <property type="term" value="P:regulation of DNA-templated transcription elongation"/>
    <property type="evidence" value="ECO:0007669"/>
    <property type="project" value="UniProtKB-UniRule"/>
</dbReference>
<dbReference type="FunFam" id="1.10.287.180:FF:000001">
    <property type="entry name" value="Transcription elongation factor GreA"/>
    <property type="match status" value="1"/>
</dbReference>
<dbReference type="FunFam" id="3.10.50.30:FF:000001">
    <property type="entry name" value="Transcription elongation factor GreA"/>
    <property type="match status" value="1"/>
</dbReference>
<dbReference type="Gene3D" id="3.10.50.30">
    <property type="entry name" value="Transcription elongation factor, GreA/GreB, C-terminal domain"/>
    <property type="match status" value="1"/>
</dbReference>
<dbReference type="Gene3D" id="1.10.287.180">
    <property type="entry name" value="Transcription elongation factor, GreA/GreB, N-terminal domain"/>
    <property type="match status" value="1"/>
</dbReference>
<dbReference type="HAMAP" id="MF_00105">
    <property type="entry name" value="GreA_GreB"/>
    <property type="match status" value="1"/>
</dbReference>
<dbReference type="HAMAP" id="MF_00930">
    <property type="entry name" value="GreB"/>
    <property type="match status" value="1"/>
</dbReference>
<dbReference type="InterPro" id="IPR036953">
    <property type="entry name" value="GreA/GreB_C_sf"/>
</dbReference>
<dbReference type="InterPro" id="IPR018151">
    <property type="entry name" value="TF_GreA/GreB_CS"/>
</dbReference>
<dbReference type="InterPro" id="IPR028624">
    <property type="entry name" value="Tscrpt_elong_fac_GreA/B"/>
</dbReference>
<dbReference type="InterPro" id="IPR001437">
    <property type="entry name" value="Tscrpt_elong_fac_GreA/B_C"/>
</dbReference>
<dbReference type="InterPro" id="IPR023459">
    <property type="entry name" value="Tscrpt_elong_fac_GreA/B_fam"/>
</dbReference>
<dbReference type="InterPro" id="IPR022691">
    <property type="entry name" value="Tscrpt_elong_fac_GreA/B_N"/>
</dbReference>
<dbReference type="InterPro" id="IPR036805">
    <property type="entry name" value="Tscrpt_elong_fac_GreA/B_N_sf"/>
</dbReference>
<dbReference type="InterPro" id="IPR006358">
    <property type="entry name" value="Tscrpt_elong_fac_GreB"/>
</dbReference>
<dbReference type="NCBIfam" id="TIGR01461">
    <property type="entry name" value="greB"/>
    <property type="match status" value="1"/>
</dbReference>
<dbReference type="NCBIfam" id="NF002506">
    <property type="entry name" value="PRK01885.1"/>
    <property type="match status" value="1"/>
</dbReference>
<dbReference type="PANTHER" id="PTHR30437">
    <property type="entry name" value="TRANSCRIPTION ELONGATION FACTOR GREA"/>
    <property type="match status" value="1"/>
</dbReference>
<dbReference type="PANTHER" id="PTHR30437:SF6">
    <property type="entry name" value="TRANSCRIPTION ELONGATION FACTOR GREB"/>
    <property type="match status" value="1"/>
</dbReference>
<dbReference type="Pfam" id="PF01272">
    <property type="entry name" value="GreA_GreB"/>
    <property type="match status" value="1"/>
</dbReference>
<dbReference type="Pfam" id="PF03449">
    <property type="entry name" value="GreA_GreB_N"/>
    <property type="match status" value="1"/>
</dbReference>
<dbReference type="PIRSF" id="PIRSF006092">
    <property type="entry name" value="GreA_GreB"/>
    <property type="match status" value="1"/>
</dbReference>
<dbReference type="SUPFAM" id="SSF54534">
    <property type="entry name" value="FKBP-like"/>
    <property type="match status" value="1"/>
</dbReference>
<dbReference type="SUPFAM" id="SSF46557">
    <property type="entry name" value="GreA transcript cleavage protein, N-terminal domain"/>
    <property type="match status" value="1"/>
</dbReference>
<dbReference type="PROSITE" id="PS00829">
    <property type="entry name" value="GREAB_1"/>
    <property type="match status" value="1"/>
</dbReference>
<organism>
    <name type="scientific">Neisseria meningitidis serogroup A / serotype 4A (strain DSM 15465 / Z2491)</name>
    <dbReference type="NCBI Taxonomy" id="122587"/>
    <lineage>
        <taxon>Bacteria</taxon>
        <taxon>Pseudomonadati</taxon>
        <taxon>Pseudomonadota</taxon>
        <taxon>Betaproteobacteria</taxon>
        <taxon>Neisseriales</taxon>
        <taxon>Neisseriaceae</taxon>
        <taxon>Neisseria</taxon>
    </lineage>
</organism>
<name>GREB_NEIMA</name>
<reference key="1">
    <citation type="journal article" date="2000" name="Nature">
        <title>Complete DNA sequence of a serogroup A strain of Neisseria meningitidis Z2491.</title>
        <authorList>
            <person name="Parkhill J."/>
            <person name="Achtman M."/>
            <person name="James K.D."/>
            <person name="Bentley S.D."/>
            <person name="Churcher C.M."/>
            <person name="Klee S.R."/>
            <person name="Morelli G."/>
            <person name="Basham D."/>
            <person name="Brown D."/>
            <person name="Chillingworth T."/>
            <person name="Davies R.M."/>
            <person name="Davis P."/>
            <person name="Devlin K."/>
            <person name="Feltwell T."/>
            <person name="Hamlin N."/>
            <person name="Holroyd S."/>
            <person name="Jagels K."/>
            <person name="Leather S."/>
            <person name="Moule S."/>
            <person name="Mungall K.L."/>
            <person name="Quail M.A."/>
            <person name="Rajandream M.A."/>
            <person name="Rutherford K.M."/>
            <person name="Simmonds M."/>
            <person name="Skelton J."/>
            <person name="Whitehead S."/>
            <person name="Spratt B.G."/>
            <person name="Barrell B.G."/>
        </authorList>
    </citation>
    <scope>NUCLEOTIDE SEQUENCE [LARGE SCALE GENOMIC DNA]</scope>
    <source>
        <strain>DSM 15465 / Z2491</strain>
    </source>
</reference>
<accession>Q9JVD0</accession>
<accession>A1IQU2</accession>
<evidence type="ECO:0000255" key="1">
    <source>
        <dbReference type="HAMAP-Rule" id="MF_00930"/>
    </source>
</evidence>